<proteinExistence type="inferred from homology"/>
<evidence type="ECO:0000255" key="1">
    <source>
        <dbReference type="HAMAP-Rule" id="MF_00300"/>
    </source>
</evidence>
<dbReference type="EC" id="4.2.3.5" evidence="1"/>
<dbReference type="EMBL" id="CP000282">
    <property type="protein sequence ID" value="ABD81351.1"/>
    <property type="molecule type" value="Genomic_DNA"/>
</dbReference>
<dbReference type="RefSeq" id="WP_011468569.1">
    <property type="nucleotide sequence ID" value="NC_007912.1"/>
</dbReference>
<dbReference type="SMR" id="Q21IX8"/>
<dbReference type="STRING" id="203122.Sde_2091"/>
<dbReference type="GeneID" id="98613763"/>
<dbReference type="KEGG" id="sde:Sde_2091"/>
<dbReference type="eggNOG" id="COG0082">
    <property type="taxonomic scope" value="Bacteria"/>
</dbReference>
<dbReference type="HOGENOM" id="CLU_034547_0_2_6"/>
<dbReference type="OrthoDB" id="9771806at2"/>
<dbReference type="UniPathway" id="UPA00053">
    <property type="reaction ID" value="UER00090"/>
</dbReference>
<dbReference type="Proteomes" id="UP000001947">
    <property type="component" value="Chromosome"/>
</dbReference>
<dbReference type="GO" id="GO:0005829">
    <property type="term" value="C:cytosol"/>
    <property type="evidence" value="ECO:0007669"/>
    <property type="project" value="TreeGrafter"/>
</dbReference>
<dbReference type="GO" id="GO:0004107">
    <property type="term" value="F:chorismate synthase activity"/>
    <property type="evidence" value="ECO:0007669"/>
    <property type="project" value="UniProtKB-UniRule"/>
</dbReference>
<dbReference type="GO" id="GO:0010181">
    <property type="term" value="F:FMN binding"/>
    <property type="evidence" value="ECO:0007669"/>
    <property type="project" value="TreeGrafter"/>
</dbReference>
<dbReference type="GO" id="GO:0008652">
    <property type="term" value="P:amino acid biosynthetic process"/>
    <property type="evidence" value="ECO:0007669"/>
    <property type="project" value="UniProtKB-KW"/>
</dbReference>
<dbReference type="GO" id="GO:0009073">
    <property type="term" value="P:aromatic amino acid family biosynthetic process"/>
    <property type="evidence" value="ECO:0007669"/>
    <property type="project" value="UniProtKB-KW"/>
</dbReference>
<dbReference type="GO" id="GO:0009423">
    <property type="term" value="P:chorismate biosynthetic process"/>
    <property type="evidence" value="ECO:0007669"/>
    <property type="project" value="UniProtKB-UniRule"/>
</dbReference>
<dbReference type="CDD" id="cd07304">
    <property type="entry name" value="Chorismate_synthase"/>
    <property type="match status" value="1"/>
</dbReference>
<dbReference type="FunFam" id="3.60.150.10:FF:000001">
    <property type="entry name" value="Chorismate synthase"/>
    <property type="match status" value="1"/>
</dbReference>
<dbReference type="Gene3D" id="3.60.150.10">
    <property type="entry name" value="Chorismate synthase AroC"/>
    <property type="match status" value="1"/>
</dbReference>
<dbReference type="HAMAP" id="MF_00300">
    <property type="entry name" value="Chorismate_synth"/>
    <property type="match status" value="1"/>
</dbReference>
<dbReference type="InterPro" id="IPR000453">
    <property type="entry name" value="Chorismate_synth"/>
</dbReference>
<dbReference type="InterPro" id="IPR035904">
    <property type="entry name" value="Chorismate_synth_AroC_sf"/>
</dbReference>
<dbReference type="InterPro" id="IPR020541">
    <property type="entry name" value="Chorismate_synthase_CS"/>
</dbReference>
<dbReference type="NCBIfam" id="TIGR00033">
    <property type="entry name" value="aroC"/>
    <property type="match status" value="1"/>
</dbReference>
<dbReference type="NCBIfam" id="NF003793">
    <property type="entry name" value="PRK05382.1"/>
    <property type="match status" value="1"/>
</dbReference>
<dbReference type="PANTHER" id="PTHR21085">
    <property type="entry name" value="CHORISMATE SYNTHASE"/>
    <property type="match status" value="1"/>
</dbReference>
<dbReference type="PANTHER" id="PTHR21085:SF0">
    <property type="entry name" value="CHORISMATE SYNTHASE"/>
    <property type="match status" value="1"/>
</dbReference>
<dbReference type="Pfam" id="PF01264">
    <property type="entry name" value="Chorismate_synt"/>
    <property type="match status" value="1"/>
</dbReference>
<dbReference type="PIRSF" id="PIRSF001456">
    <property type="entry name" value="Chorismate_synth"/>
    <property type="match status" value="1"/>
</dbReference>
<dbReference type="SUPFAM" id="SSF103263">
    <property type="entry name" value="Chorismate synthase, AroC"/>
    <property type="match status" value="1"/>
</dbReference>
<dbReference type="PROSITE" id="PS00787">
    <property type="entry name" value="CHORISMATE_SYNTHASE_1"/>
    <property type="match status" value="1"/>
</dbReference>
<dbReference type="PROSITE" id="PS00788">
    <property type="entry name" value="CHORISMATE_SYNTHASE_2"/>
    <property type="match status" value="1"/>
</dbReference>
<dbReference type="PROSITE" id="PS00789">
    <property type="entry name" value="CHORISMATE_SYNTHASE_3"/>
    <property type="match status" value="1"/>
</dbReference>
<name>AROC_SACD2</name>
<protein>
    <recommendedName>
        <fullName evidence="1">Chorismate synthase</fullName>
        <shortName evidence="1">CS</shortName>
        <ecNumber evidence="1">4.2.3.5</ecNumber>
    </recommendedName>
    <alternativeName>
        <fullName evidence="1">5-enolpyruvylshikimate-3-phosphate phospholyase</fullName>
    </alternativeName>
</protein>
<keyword id="KW-0028">Amino-acid biosynthesis</keyword>
<keyword id="KW-0057">Aromatic amino acid biosynthesis</keyword>
<keyword id="KW-0274">FAD</keyword>
<keyword id="KW-0285">Flavoprotein</keyword>
<keyword id="KW-0288">FMN</keyword>
<keyword id="KW-0456">Lyase</keyword>
<keyword id="KW-0521">NADP</keyword>
<keyword id="KW-1185">Reference proteome</keyword>
<gene>
    <name evidence="1" type="primary">aroC</name>
    <name type="ordered locus">Sde_2091</name>
</gene>
<sequence length="371" mass="39621">MSGNTFGKLFTVTTFGESHGLALGAIIDGCPPGIELSEEDLQLDLDRRKPGTSRYTTQRKEADQVKILSGVFEGKTTGTPIGLLIENTDQRSKDYGKIKDQFRPAHADYTYMQKYGIRDYRGGGRSSARETAMRVAAGAVAKKVLANLWGIKIRGYLSQLGPIKAELLDWNEVEQNPFFCPDKSKVPEMEAYMQALNKEGNSVGAKITVVAENMIPGLGEPVFDRIDADLAHALMGINAVKGVEIGAGFACVAQKGTEHRDEITPEGFKSNQAGGVLGGISTGQDLIASLALKPTSSLRIPGQSVDIEGNPVEVITTGRHDPCVGIRATPIAEAMMALVILDHALRNRGQNGHVQSGVPIIPGSIPGQIGS</sequence>
<comment type="function">
    <text evidence="1">Catalyzes the anti-1,4-elimination of the C-3 phosphate and the C-6 proR hydrogen from 5-enolpyruvylshikimate-3-phosphate (EPSP) to yield chorismate, which is the branch point compound that serves as the starting substrate for the three terminal pathways of aromatic amino acid biosynthesis. This reaction introduces a second double bond into the aromatic ring system.</text>
</comment>
<comment type="catalytic activity">
    <reaction evidence="1">
        <text>5-O-(1-carboxyvinyl)-3-phosphoshikimate = chorismate + phosphate</text>
        <dbReference type="Rhea" id="RHEA:21020"/>
        <dbReference type="ChEBI" id="CHEBI:29748"/>
        <dbReference type="ChEBI" id="CHEBI:43474"/>
        <dbReference type="ChEBI" id="CHEBI:57701"/>
        <dbReference type="EC" id="4.2.3.5"/>
    </reaction>
</comment>
<comment type="cofactor">
    <cofactor evidence="1">
        <name>FMNH2</name>
        <dbReference type="ChEBI" id="CHEBI:57618"/>
    </cofactor>
    <text evidence="1">Reduced FMN (FMNH(2)).</text>
</comment>
<comment type="pathway">
    <text evidence="1">Metabolic intermediate biosynthesis; chorismate biosynthesis; chorismate from D-erythrose 4-phosphate and phosphoenolpyruvate: step 7/7.</text>
</comment>
<comment type="subunit">
    <text evidence="1">Homotetramer.</text>
</comment>
<comment type="similarity">
    <text evidence="1">Belongs to the chorismate synthase family.</text>
</comment>
<feature type="chain" id="PRO_0000256332" description="Chorismate synthase">
    <location>
        <begin position="1"/>
        <end position="371"/>
    </location>
</feature>
<feature type="binding site" evidence="1">
    <location>
        <position position="48"/>
    </location>
    <ligand>
        <name>NADP(+)</name>
        <dbReference type="ChEBI" id="CHEBI:58349"/>
    </ligand>
</feature>
<feature type="binding site" evidence="1">
    <location>
        <position position="54"/>
    </location>
    <ligand>
        <name>NADP(+)</name>
        <dbReference type="ChEBI" id="CHEBI:58349"/>
    </ligand>
</feature>
<feature type="binding site" evidence="1">
    <location>
        <begin position="125"/>
        <end position="127"/>
    </location>
    <ligand>
        <name>FMN</name>
        <dbReference type="ChEBI" id="CHEBI:58210"/>
    </ligand>
</feature>
<feature type="binding site" evidence="1">
    <location>
        <begin position="238"/>
        <end position="239"/>
    </location>
    <ligand>
        <name>FMN</name>
        <dbReference type="ChEBI" id="CHEBI:58210"/>
    </ligand>
</feature>
<feature type="binding site" evidence="1">
    <location>
        <position position="278"/>
    </location>
    <ligand>
        <name>FMN</name>
        <dbReference type="ChEBI" id="CHEBI:58210"/>
    </ligand>
</feature>
<feature type="binding site" evidence="1">
    <location>
        <begin position="293"/>
        <end position="297"/>
    </location>
    <ligand>
        <name>FMN</name>
        <dbReference type="ChEBI" id="CHEBI:58210"/>
    </ligand>
</feature>
<feature type="binding site" evidence="1">
    <location>
        <position position="319"/>
    </location>
    <ligand>
        <name>FMN</name>
        <dbReference type="ChEBI" id="CHEBI:58210"/>
    </ligand>
</feature>
<organism>
    <name type="scientific">Saccharophagus degradans (strain 2-40 / ATCC 43961 / DSM 17024)</name>
    <dbReference type="NCBI Taxonomy" id="203122"/>
    <lineage>
        <taxon>Bacteria</taxon>
        <taxon>Pseudomonadati</taxon>
        <taxon>Pseudomonadota</taxon>
        <taxon>Gammaproteobacteria</taxon>
        <taxon>Cellvibrionales</taxon>
        <taxon>Cellvibrionaceae</taxon>
        <taxon>Saccharophagus</taxon>
    </lineage>
</organism>
<accession>Q21IX8</accession>
<reference key="1">
    <citation type="journal article" date="2008" name="PLoS Genet.">
        <title>Complete genome sequence of the complex carbohydrate-degrading marine bacterium, Saccharophagus degradans strain 2-40 T.</title>
        <authorList>
            <person name="Weiner R.M."/>
            <person name="Taylor L.E. II"/>
            <person name="Henrissat B."/>
            <person name="Hauser L."/>
            <person name="Land M."/>
            <person name="Coutinho P.M."/>
            <person name="Rancurel C."/>
            <person name="Saunders E.H."/>
            <person name="Longmire A.G."/>
            <person name="Zhang H."/>
            <person name="Bayer E.A."/>
            <person name="Gilbert H.J."/>
            <person name="Larimer F."/>
            <person name="Zhulin I.B."/>
            <person name="Ekborg N.A."/>
            <person name="Lamed R."/>
            <person name="Richardson P.M."/>
            <person name="Borovok I."/>
            <person name="Hutcheson S."/>
        </authorList>
    </citation>
    <scope>NUCLEOTIDE SEQUENCE [LARGE SCALE GENOMIC DNA]</scope>
    <source>
        <strain>2-40 / ATCC 43961 / DSM 17024</strain>
    </source>
</reference>